<reference key="1">
    <citation type="journal article" date="2004" name="Genome Res.">
        <title>The status, quality, and expansion of the NIH full-length cDNA project: the Mammalian Gene Collection (MGC).</title>
        <authorList>
            <consortium name="The MGC Project Team"/>
        </authorList>
    </citation>
    <scope>NUCLEOTIDE SEQUENCE [LARGE SCALE MRNA]</scope>
    <source>
        <tissue>Spleen</tissue>
    </source>
</reference>
<accession>B0K035</accession>
<dbReference type="EMBL" id="BC159435">
    <property type="protein sequence ID" value="AAI59436.1"/>
    <property type="molecule type" value="mRNA"/>
</dbReference>
<dbReference type="RefSeq" id="NP_001277039.1">
    <property type="nucleotide sequence ID" value="NM_001290110.1"/>
</dbReference>
<dbReference type="SMR" id="B0K035"/>
<dbReference type="FunCoup" id="B0K035">
    <property type="interactions" value="1215"/>
</dbReference>
<dbReference type="STRING" id="10116.ENSRNOP00000071825"/>
<dbReference type="PhosphoSitePlus" id="B0K035"/>
<dbReference type="PaxDb" id="10116-ENSRNOP00000042360"/>
<dbReference type="Ensembl" id="ENSRNOT00000079069.2">
    <property type="protein sequence ID" value="ENSRNOP00000072258.1"/>
    <property type="gene ID" value="ENSRNOG00000058050.2"/>
</dbReference>
<dbReference type="GeneID" id="100911069"/>
<dbReference type="KEGG" id="rno:100911069"/>
<dbReference type="AGR" id="RGD:6494892"/>
<dbReference type="CTD" id="113115"/>
<dbReference type="RGD" id="6494892">
    <property type="gene designation" value="Mtfr2"/>
</dbReference>
<dbReference type="eggNOG" id="ENOG502QZG7">
    <property type="taxonomic scope" value="Eukaryota"/>
</dbReference>
<dbReference type="GeneTree" id="ENSGT00950000183163"/>
<dbReference type="HOGENOM" id="CLU_059135_0_0_1"/>
<dbReference type="InParanoid" id="B0K035"/>
<dbReference type="OrthoDB" id="2133332at2759"/>
<dbReference type="PhylomeDB" id="B0K035"/>
<dbReference type="TreeFam" id="TF331404"/>
<dbReference type="PRO" id="PR:B0K035"/>
<dbReference type="Proteomes" id="UP000002494">
    <property type="component" value="Chromosome 1"/>
</dbReference>
<dbReference type="Bgee" id="ENSRNOG00000058050">
    <property type="expression patterns" value="Expressed in thymus and 20 other cell types or tissues"/>
</dbReference>
<dbReference type="ExpressionAtlas" id="B0K035">
    <property type="expression patterns" value="baseline and differential"/>
</dbReference>
<dbReference type="GO" id="GO:0005739">
    <property type="term" value="C:mitochondrion"/>
    <property type="evidence" value="ECO:0000266"/>
    <property type="project" value="RGD"/>
</dbReference>
<dbReference type="GO" id="GO:0009060">
    <property type="term" value="P:aerobic respiration"/>
    <property type="evidence" value="ECO:0000266"/>
    <property type="project" value="RGD"/>
</dbReference>
<dbReference type="GO" id="GO:0000266">
    <property type="term" value="P:mitochondrial fission"/>
    <property type="evidence" value="ECO:0000266"/>
    <property type="project" value="RGD"/>
</dbReference>
<dbReference type="GO" id="GO:0007005">
    <property type="term" value="P:mitochondrion organization"/>
    <property type="evidence" value="ECO:0000266"/>
    <property type="project" value="RGD"/>
</dbReference>
<dbReference type="InterPro" id="IPR007972">
    <property type="entry name" value="Mtfr1"/>
</dbReference>
<dbReference type="PANTHER" id="PTHR14215:SF2">
    <property type="entry name" value="MITOCHONDRIAL FISSION REGULATOR 2"/>
    <property type="match status" value="1"/>
</dbReference>
<dbReference type="PANTHER" id="PTHR14215">
    <property type="entry name" value="PROTEIN OF UNKNOWN FUNCTION DUF729"/>
    <property type="match status" value="1"/>
</dbReference>
<dbReference type="Pfam" id="PF05308">
    <property type="entry name" value="Mito_fiss_reg"/>
    <property type="match status" value="1"/>
</dbReference>
<evidence type="ECO:0000250" key="1"/>
<evidence type="ECO:0000250" key="2">
    <source>
        <dbReference type="UniProtKB" id="Q6P444"/>
    </source>
</evidence>
<evidence type="ECO:0000255" key="3"/>
<evidence type="ECO:0000256" key="4">
    <source>
        <dbReference type="SAM" id="MobiDB-lite"/>
    </source>
</evidence>
<evidence type="ECO:0000305" key="5"/>
<organism>
    <name type="scientific">Rattus norvegicus</name>
    <name type="common">Rat</name>
    <dbReference type="NCBI Taxonomy" id="10116"/>
    <lineage>
        <taxon>Eukaryota</taxon>
        <taxon>Metazoa</taxon>
        <taxon>Chordata</taxon>
        <taxon>Craniata</taxon>
        <taxon>Vertebrata</taxon>
        <taxon>Euteleostomi</taxon>
        <taxon>Mammalia</taxon>
        <taxon>Eutheria</taxon>
        <taxon>Euarchontoglires</taxon>
        <taxon>Glires</taxon>
        <taxon>Rodentia</taxon>
        <taxon>Myomorpha</taxon>
        <taxon>Muroidea</taxon>
        <taxon>Muridae</taxon>
        <taxon>Murinae</taxon>
        <taxon>Rattus</taxon>
    </lineage>
</organism>
<feature type="chain" id="PRO_0000417559" description="Mitochondrial fission regulator 2">
    <location>
        <begin position="1"/>
        <end position="373"/>
    </location>
</feature>
<feature type="region of interest" description="Disordered" evidence="4">
    <location>
        <begin position="189"/>
        <end position="331"/>
    </location>
</feature>
<feature type="region of interest" description="Disordered" evidence="4">
    <location>
        <begin position="346"/>
        <end position="373"/>
    </location>
</feature>
<feature type="coiled-coil region" evidence="3">
    <location>
        <begin position="151"/>
        <end position="179"/>
    </location>
</feature>
<feature type="compositionally biased region" description="Pro residues" evidence="4">
    <location>
        <begin position="224"/>
        <end position="239"/>
    </location>
</feature>
<feature type="compositionally biased region" description="Basic and acidic residues" evidence="4">
    <location>
        <begin position="275"/>
        <end position="287"/>
    </location>
</feature>
<feature type="compositionally biased region" description="Basic and acidic residues" evidence="4">
    <location>
        <begin position="297"/>
        <end position="310"/>
    </location>
</feature>
<feature type="compositionally biased region" description="Polar residues" evidence="4">
    <location>
        <begin position="354"/>
        <end position="373"/>
    </location>
</feature>
<feature type="modified residue" description="Phosphoserine" evidence="2">
    <location>
        <position position="136"/>
    </location>
</feature>
<feature type="modified residue" description="Phosphoserine" evidence="2">
    <location>
        <position position="312"/>
    </location>
</feature>
<feature type="modified residue" description="Phosphoserine" evidence="2">
    <location>
        <position position="348"/>
    </location>
</feature>
<proteinExistence type="evidence at transcript level"/>
<protein>
    <recommendedName>
        <fullName>Mitochondrial fission regulator 2</fullName>
    </recommendedName>
</protein>
<keyword id="KW-0175">Coiled coil</keyword>
<keyword id="KW-0496">Mitochondrion</keyword>
<keyword id="KW-0597">Phosphoprotein</keyword>
<keyword id="KW-1185">Reference proteome</keyword>
<comment type="function">
    <text evidence="1">May play a role in mitochondrial aerobic respiration essentially in the testis. Can also promote mitochondrial fission (By similarity).</text>
</comment>
<comment type="subcellular location">
    <subcellularLocation>
        <location evidence="1">Mitochondrion</location>
    </subcellularLocation>
    <text evidence="1">Associated with membranes.</text>
</comment>
<comment type="similarity">
    <text evidence="5">Belongs to the MTFR1 family.</text>
</comment>
<name>MTFR2_RAT</name>
<sequence length="373" mass="40772">MQRDGTNEQCFLELASPMSFILNILRNMLAYFGVPVDQDLLIFQNKDYGSARSIVRVIGRMLPLEPCRRPRFELTPPANAKEVDDYELAVPSFADVLCVADDGEAGCLRFRHSLWKKAEGKAALFHPSKLPWDLSSPALSQNRTVADDLPVSEAAIKKIAALEDELTSLRAQIAAIVAMQDLGGGGETGFISLSDGPSMEQVPPSSATARLSVEPDHVPSVVLSPPPLPPPPPPLPPPQFSLQPPSSLPVPPGSANTRGIDNLAAEMKKRPSGVKKTDGSHHSESQRVSDVPNMLDVLKDMNKVKLRPVERSPGGRPIQKRRRQSSQWDPVSLISNALKQKFAFQDDSFDSENRSWQGSPFSSPETSRNGSRF</sequence>
<gene>
    <name type="primary">Mtfr2</name>
    <name type="synonym">Fam54a</name>
</gene>